<organism>
    <name type="scientific">Escherichia coli O139:H28 (strain E24377A / ETEC)</name>
    <dbReference type="NCBI Taxonomy" id="331111"/>
    <lineage>
        <taxon>Bacteria</taxon>
        <taxon>Pseudomonadati</taxon>
        <taxon>Pseudomonadota</taxon>
        <taxon>Gammaproteobacteria</taxon>
        <taxon>Enterobacterales</taxon>
        <taxon>Enterobacteriaceae</taxon>
        <taxon>Escherichia</taxon>
    </lineage>
</organism>
<evidence type="ECO:0000255" key="1">
    <source>
        <dbReference type="HAMAP-Rule" id="MF_01030"/>
    </source>
</evidence>
<comment type="catalytic activity">
    <reaction evidence="1">
        <text>D-serine = pyruvate + NH4(+)</text>
        <dbReference type="Rhea" id="RHEA:13977"/>
        <dbReference type="ChEBI" id="CHEBI:15361"/>
        <dbReference type="ChEBI" id="CHEBI:28938"/>
        <dbReference type="ChEBI" id="CHEBI:35247"/>
        <dbReference type="EC" id="4.3.1.18"/>
    </reaction>
</comment>
<comment type="cofactor">
    <cofactor evidence="1">
        <name>pyridoxal 5'-phosphate</name>
        <dbReference type="ChEBI" id="CHEBI:597326"/>
    </cofactor>
</comment>
<comment type="subunit">
    <text evidence="1">Monomer.</text>
</comment>
<comment type="similarity">
    <text evidence="1">Belongs to the serine/threonine dehydratase family. DsdA subfamily.</text>
</comment>
<gene>
    <name evidence="1" type="primary">dsdA</name>
    <name type="ordered locus">EcE24377A_2652</name>
</gene>
<sequence>MENAKMNSLIAQYPLVKDLVALKETTWFNPGTTSLAEGLPYVGLTEQDVQDAHARLSRFAPYLAKAFPETAATGGIIESELVAIPAMQKRLEKEYQQPISGQLLLKKDSHLPISGSIKARGGIYEVLAHAEKLALEAGLLTLDDDYSKLLSPEFKQFFSQYSIAVGSTGNLGLSIGIMSARIGFKVTVHMSADARAWKKAKLRSHGVTVVEYEQDYGVAVEEGRKAAQSDPNCFFIDDENSRTLFLGYSVAGQRLKAQFAQQGRIVDADNPLFVYLPCGVGGGPGGVAFGLKLAFGDHVHCFFAEPTHSPCMLLGVHTGLHDQISVQDIGIDNLTAADGLAVGRASGFVGRAMERLLDGFYTLSDQTMYDMLGWLAQEEGIRLEPSALAGMAGPQRVCASVSYQQMHGFSAEQLRNATHLVWATGGGMVPEEEMNQYLAKGR</sequence>
<protein>
    <recommendedName>
        <fullName evidence="1">D-serine dehydratase</fullName>
        <ecNumber evidence="1">4.3.1.18</ecNumber>
    </recommendedName>
    <alternativeName>
        <fullName evidence="1">D-serine deaminase</fullName>
        <shortName evidence="1">DSD</shortName>
    </alternativeName>
</protein>
<feature type="chain" id="PRO_1000063711" description="D-serine dehydratase">
    <location>
        <begin position="1"/>
        <end position="442"/>
    </location>
</feature>
<feature type="modified residue" description="N6-(pyridoxal phosphate)lysine" evidence="1">
    <location>
        <position position="118"/>
    </location>
</feature>
<proteinExistence type="inferred from homology"/>
<keyword id="KW-0456">Lyase</keyword>
<keyword id="KW-0663">Pyridoxal phosphate</keyword>
<keyword id="KW-1185">Reference proteome</keyword>
<reference key="1">
    <citation type="journal article" date="2008" name="J. Bacteriol.">
        <title>The pangenome structure of Escherichia coli: comparative genomic analysis of E. coli commensal and pathogenic isolates.</title>
        <authorList>
            <person name="Rasko D.A."/>
            <person name="Rosovitz M.J."/>
            <person name="Myers G.S.A."/>
            <person name="Mongodin E.F."/>
            <person name="Fricke W.F."/>
            <person name="Gajer P."/>
            <person name="Crabtree J."/>
            <person name="Sebaihia M."/>
            <person name="Thomson N.R."/>
            <person name="Chaudhuri R."/>
            <person name="Henderson I.R."/>
            <person name="Sperandio V."/>
            <person name="Ravel J."/>
        </authorList>
    </citation>
    <scope>NUCLEOTIDE SEQUENCE [LARGE SCALE GENOMIC DNA]</scope>
    <source>
        <strain>E24377A / ETEC</strain>
    </source>
</reference>
<accession>A7ZPH2</accession>
<name>SDHD_ECO24</name>
<dbReference type="EC" id="4.3.1.18" evidence="1"/>
<dbReference type="EMBL" id="CP000800">
    <property type="protein sequence ID" value="ABV20557.1"/>
    <property type="molecule type" value="Genomic_DNA"/>
</dbReference>
<dbReference type="RefSeq" id="WP_000426426.1">
    <property type="nucleotide sequence ID" value="NC_009801.1"/>
</dbReference>
<dbReference type="SMR" id="A7ZPH2"/>
<dbReference type="GeneID" id="75202565"/>
<dbReference type="KEGG" id="ecw:EcE24377A_2652"/>
<dbReference type="HOGENOM" id="CLU_035707_0_0_6"/>
<dbReference type="Proteomes" id="UP000001122">
    <property type="component" value="Chromosome"/>
</dbReference>
<dbReference type="GO" id="GO:0008721">
    <property type="term" value="F:D-serine ammonia-lyase activity"/>
    <property type="evidence" value="ECO:0007669"/>
    <property type="project" value="UniProtKB-EC"/>
</dbReference>
<dbReference type="GO" id="GO:0016836">
    <property type="term" value="F:hydro-lyase activity"/>
    <property type="evidence" value="ECO:0007669"/>
    <property type="project" value="UniProtKB-UniRule"/>
</dbReference>
<dbReference type="GO" id="GO:0030170">
    <property type="term" value="F:pyridoxal phosphate binding"/>
    <property type="evidence" value="ECO:0007669"/>
    <property type="project" value="InterPro"/>
</dbReference>
<dbReference type="GO" id="GO:0036088">
    <property type="term" value="P:D-serine catabolic process"/>
    <property type="evidence" value="ECO:0007669"/>
    <property type="project" value="TreeGrafter"/>
</dbReference>
<dbReference type="GO" id="GO:0009097">
    <property type="term" value="P:isoleucine biosynthetic process"/>
    <property type="evidence" value="ECO:0007669"/>
    <property type="project" value="TreeGrafter"/>
</dbReference>
<dbReference type="CDD" id="cd06447">
    <property type="entry name" value="D-Ser-dehyd"/>
    <property type="match status" value="1"/>
</dbReference>
<dbReference type="FunFam" id="3.40.50.1100:FF:000018">
    <property type="entry name" value="D-serine dehydratase"/>
    <property type="match status" value="1"/>
</dbReference>
<dbReference type="Gene3D" id="3.40.50.1100">
    <property type="match status" value="2"/>
</dbReference>
<dbReference type="HAMAP" id="MF_01030">
    <property type="entry name" value="D_Ser_dehydrat"/>
    <property type="match status" value="1"/>
</dbReference>
<dbReference type="InterPro" id="IPR011780">
    <property type="entry name" value="D_Ser_am_lyase"/>
</dbReference>
<dbReference type="InterPro" id="IPR050147">
    <property type="entry name" value="Ser/Thr_Dehydratase"/>
</dbReference>
<dbReference type="InterPro" id="IPR000634">
    <property type="entry name" value="Ser/Thr_deHydtase_PyrdxlP-BS"/>
</dbReference>
<dbReference type="InterPro" id="IPR001926">
    <property type="entry name" value="TrpB-like_PALP"/>
</dbReference>
<dbReference type="InterPro" id="IPR036052">
    <property type="entry name" value="TrpB-like_PALP_sf"/>
</dbReference>
<dbReference type="NCBIfam" id="TIGR02035">
    <property type="entry name" value="D_Ser_am_lyase"/>
    <property type="match status" value="1"/>
</dbReference>
<dbReference type="NCBIfam" id="NF002823">
    <property type="entry name" value="PRK02991.1"/>
    <property type="match status" value="1"/>
</dbReference>
<dbReference type="PANTHER" id="PTHR48078:SF9">
    <property type="entry name" value="D-SERINE DEHYDRATASE"/>
    <property type="match status" value="1"/>
</dbReference>
<dbReference type="PANTHER" id="PTHR48078">
    <property type="entry name" value="THREONINE DEHYDRATASE, MITOCHONDRIAL-RELATED"/>
    <property type="match status" value="1"/>
</dbReference>
<dbReference type="Pfam" id="PF00291">
    <property type="entry name" value="PALP"/>
    <property type="match status" value="1"/>
</dbReference>
<dbReference type="SUPFAM" id="SSF53686">
    <property type="entry name" value="Tryptophan synthase beta subunit-like PLP-dependent enzymes"/>
    <property type="match status" value="1"/>
</dbReference>
<dbReference type="PROSITE" id="PS00165">
    <property type="entry name" value="DEHYDRATASE_SER_THR"/>
    <property type="match status" value="1"/>
</dbReference>